<accession>P44401</accession>
<evidence type="ECO:0000255" key="1">
    <source>
        <dbReference type="HAMAP-Rule" id="MF_02220"/>
    </source>
</evidence>
<evidence type="ECO:0000305" key="2"/>
<sequence length="493" mass="54804">MYIGIDCGTQGTKAIVLDSVQKKVIGVGYAKHELITQSNGRREQQPNWWIEALQQALQIALKQAKNSPHFSPNLVKGIGISGQQHGLVMLDKNDRPLYKAKLWCDTETATENDILIEKLGGQTAVFEKLGIICQTGYTASKLSWFRQNYPDKFANIRKIMLPHDYLNYWLTGKFCTEFGDASGSGYFDVVKREWKREVFKYLAPELNMDEVLPKLLSAEQKIGVIKPEIATLFGFNENVIVSTGGGDNMMGAIGTGNIREGIATMSLGTSGTLYAYTQKPLLNLPPMIANFCSSNNGWLPLVCVMNITSSNKQLMNLLNIDIEELNQLAQQAPIGANGITILPFFNGERVPPLPNTKASILGLDSSNFTRENLCRAMMESATFTLRYGLDLFRQAGLKTSQIRLIGGGAKSSFWRQMIADVMNSEVVCLQEEEAAALGGAIQAMWANGEGELEFLCETFIHLDENSKAYPNLSQVKNYQNAYERYLTHLSQLY</sequence>
<protein>
    <recommendedName>
        <fullName evidence="1">Xylulose kinase</fullName>
        <shortName evidence="1">Xylulokinase</shortName>
        <ecNumber evidence="1">2.7.1.17</ecNumber>
    </recommendedName>
</protein>
<organism>
    <name type="scientific">Haemophilus influenzae (strain ATCC 51907 / DSM 11121 / KW20 / Rd)</name>
    <dbReference type="NCBI Taxonomy" id="71421"/>
    <lineage>
        <taxon>Bacteria</taxon>
        <taxon>Pseudomonadati</taxon>
        <taxon>Pseudomonadota</taxon>
        <taxon>Gammaproteobacteria</taxon>
        <taxon>Pasteurellales</taxon>
        <taxon>Pasteurellaceae</taxon>
        <taxon>Haemophilus</taxon>
    </lineage>
</organism>
<feature type="chain" id="PRO_0000059550" description="Xylulose kinase">
    <location>
        <begin position="1"/>
        <end position="493"/>
    </location>
</feature>
<feature type="active site" description="Proton acceptor" evidence="1">
    <location>
        <position position="247"/>
    </location>
</feature>
<feature type="binding site" evidence="1">
    <location>
        <begin position="84"/>
        <end position="85"/>
    </location>
    <ligand>
        <name>substrate</name>
    </ligand>
</feature>
<feature type="site" description="Important for activity" evidence="1">
    <location>
        <position position="6"/>
    </location>
</feature>
<gene>
    <name evidence="1" type="primary">xylB</name>
    <name type="ordered locus">HI_1113</name>
</gene>
<comment type="function">
    <text evidence="1">Catalyzes the phosphorylation of D-xylulose to D-xylulose 5-phosphate.</text>
</comment>
<comment type="catalytic activity">
    <reaction evidence="1">
        <text>D-xylulose + ATP = D-xylulose 5-phosphate + ADP + H(+)</text>
        <dbReference type="Rhea" id="RHEA:10964"/>
        <dbReference type="ChEBI" id="CHEBI:15378"/>
        <dbReference type="ChEBI" id="CHEBI:17140"/>
        <dbReference type="ChEBI" id="CHEBI:30616"/>
        <dbReference type="ChEBI" id="CHEBI:57737"/>
        <dbReference type="ChEBI" id="CHEBI:456216"/>
        <dbReference type="EC" id="2.7.1.17"/>
    </reaction>
</comment>
<comment type="similarity">
    <text evidence="1 2">Belongs to the FGGY kinase family.</text>
</comment>
<comment type="sequence caution" evidence="2">
    <conflict type="erroneous initiation">
        <sequence resource="EMBL-CDS" id="AAC22767"/>
    </conflict>
</comment>
<name>XYLB_HAEIN</name>
<keyword id="KW-0067">ATP-binding</keyword>
<keyword id="KW-0119">Carbohydrate metabolism</keyword>
<keyword id="KW-0418">Kinase</keyword>
<keyword id="KW-0547">Nucleotide-binding</keyword>
<keyword id="KW-1185">Reference proteome</keyword>
<keyword id="KW-0808">Transferase</keyword>
<keyword id="KW-0859">Xylose metabolism</keyword>
<proteinExistence type="inferred from homology"/>
<reference key="1">
    <citation type="journal article" date="1995" name="Science">
        <title>Whole-genome random sequencing and assembly of Haemophilus influenzae Rd.</title>
        <authorList>
            <person name="Fleischmann R.D."/>
            <person name="Adams M.D."/>
            <person name="White O."/>
            <person name="Clayton R.A."/>
            <person name="Kirkness E.F."/>
            <person name="Kerlavage A.R."/>
            <person name="Bult C.J."/>
            <person name="Tomb J.-F."/>
            <person name="Dougherty B.A."/>
            <person name="Merrick J.M."/>
            <person name="McKenney K."/>
            <person name="Sutton G.G."/>
            <person name="FitzHugh W."/>
            <person name="Fields C.A."/>
            <person name="Gocayne J.D."/>
            <person name="Scott J.D."/>
            <person name="Shirley R."/>
            <person name="Liu L.-I."/>
            <person name="Glodek A."/>
            <person name="Kelley J.M."/>
            <person name="Weidman J.F."/>
            <person name="Phillips C.A."/>
            <person name="Spriggs T."/>
            <person name="Hedblom E."/>
            <person name="Cotton M.D."/>
            <person name="Utterback T.R."/>
            <person name="Hanna M.C."/>
            <person name="Nguyen D.T."/>
            <person name="Saudek D.M."/>
            <person name="Brandon R.C."/>
            <person name="Fine L.D."/>
            <person name="Fritchman J.L."/>
            <person name="Fuhrmann J.L."/>
            <person name="Geoghagen N.S.M."/>
            <person name="Gnehm C.L."/>
            <person name="McDonald L.A."/>
            <person name="Small K.V."/>
            <person name="Fraser C.M."/>
            <person name="Smith H.O."/>
            <person name="Venter J.C."/>
        </authorList>
    </citation>
    <scope>NUCLEOTIDE SEQUENCE [LARGE SCALE GENOMIC DNA]</scope>
    <source>
        <strain>ATCC 51907 / DSM 11121 / KW20 / Rd</strain>
    </source>
</reference>
<dbReference type="EC" id="2.7.1.17" evidence="1"/>
<dbReference type="EMBL" id="L42023">
    <property type="protein sequence ID" value="AAC22767.1"/>
    <property type="status" value="ALT_INIT"/>
    <property type="molecule type" value="Genomic_DNA"/>
</dbReference>
<dbReference type="PIR" id="E64183">
    <property type="entry name" value="E64183"/>
</dbReference>
<dbReference type="RefSeq" id="NP_439270.1">
    <property type="nucleotide sequence ID" value="NC_000907.1"/>
</dbReference>
<dbReference type="SMR" id="P44401"/>
<dbReference type="STRING" id="71421.HI_1113"/>
<dbReference type="EnsemblBacteria" id="AAC22767">
    <property type="protein sequence ID" value="AAC22767"/>
    <property type="gene ID" value="HI_1113"/>
</dbReference>
<dbReference type="KEGG" id="hin:HI_1113"/>
<dbReference type="PATRIC" id="fig|71421.8.peg.1162"/>
<dbReference type="eggNOG" id="COG1070">
    <property type="taxonomic scope" value="Bacteria"/>
</dbReference>
<dbReference type="HOGENOM" id="CLU_009281_3_0_6"/>
<dbReference type="OrthoDB" id="9805576at2"/>
<dbReference type="PhylomeDB" id="P44401"/>
<dbReference type="Proteomes" id="UP000000579">
    <property type="component" value="Chromosome"/>
</dbReference>
<dbReference type="GO" id="GO:0005524">
    <property type="term" value="F:ATP binding"/>
    <property type="evidence" value="ECO:0007669"/>
    <property type="project" value="UniProtKB-UniRule"/>
</dbReference>
<dbReference type="GO" id="GO:0004856">
    <property type="term" value="F:D-xylulokinase activity"/>
    <property type="evidence" value="ECO:0007669"/>
    <property type="project" value="UniProtKB-UniRule"/>
</dbReference>
<dbReference type="GO" id="GO:0042732">
    <property type="term" value="P:D-xylose metabolic process"/>
    <property type="evidence" value="ECO:0007669"/>
    <property type="project" value="UniProtKB-KW"/>
</dbReference>
<dbReference type="GO" id="GO:0005998">
    <property type="term" value="P:xylulose catabolic process"/>
    <property type="evidence" value="ECO:0007669"/>
    <property type="project" value="UniProtKB-UniRule"/>
</dbReference>
<dbReference type="CDD" id="cd07809">
    <property type="entry name" value="ASKHA_NBD_FGGY_BaXK-like"/>
    <property type="match status" value="1"/>
</dbReference>
<dbReference type="Gene3D" id="3.30.420.40">
    <property type="match status" value="2"/>
</dbReference>
<dbReference type="HAMAP" id="MF_02220">
    <property type="entry name" value="XylB"/>
    <property type="match status" value="1"/>
</dbReference>
<dbReference type="InterPro" id="IPR043129">
    <property type="entry name" value="ATPase_NBD"/>
</dbReference>
<dbReference type="InterPro" id="IPR000577">
    <property type="entry name" value="Carb_kinase_FGGY"/>
</dbReference>
<dbReference type="InterPro" id="IPR018483">
    <property type="entry name" value="Carb_kinase_FGGY_CS"/>
</dbReference>
<dbReference type="InterPro" id="IPR018485">
    <property type="entry name" value="FGGY_C"/>
</dbReference>
<dbReference type="InterPro" id="IPR050406">
    <property type="entry name" value="FGGY_Carb_Kinase"/>
</dbReference>
<dbReference type="InterPro" id="IPR018484">
    <property type="entry name" value="FGGY_N"/>
</dbReference>
<dbReference type="InterPro" id="IPR006000">
    <property type="entry name" value="Xylulokinase"/>
</dbReference>
<dbReference type="NCBIfam" id="TIGR01312">
    <property type="entry name" value="XylB"/>
    <property type="match status" value="1"/>
</dbReference>
<dbReference type="PANTHER" id="PTHR43095">
    <property type="entry name" value="SUGAR KINASE"/>
    <property type="match status" value="1"/>
</dbReference>
<dbReference type="PANTHER" id="PTHR43095:SF5">
    <property type="entry name" value="XYLULOSE KINASE"/>
    <property type="match status" value="1"/>
</dbReference>
<dbReference type="Pfam" id="PF02782">
    <property type="entry name" value="FGGY_C"/>
    <property type="match status" value="1"/>
</dbReference>
<dbReference type="Pfam" id="PF00370">
    <property type="entry name" value="FGGY_N"/>
    <property type="match status" value="1"/>
</dbReference>
<dbReference type="PIRSF" id="PIRSF000538">
    <property type="entry name" value="GlpK"/>
    <property type="match status" value="1"/>
</dbReference>
<dbReference type="SUPFAM" id="SSF53067">
    <property type="entry name" value="Actin-like ATPase domain"/>
    <property type="match status" value="2"/>
</dbReference>
<dbReference type="PROSITE" id="PS00933">
    <property type="entry name" value="FGGY_KINASES_1"/>
    <property type="match status" value="1"/>
</dbReference>
<dbReference type="PROSITE" id="PS00445">
    <property type="entry name" value="FGGY_KINASES_2"/>
    <property type="match status" value="1"/>
</dbReference>